<feature type="chain" id="PRO_0000347569" description="Alanine--tRNA ligase">
    <location>
        <begin position="1"/>
        <end position="879"/>
    </location>
</feature>
<feature type="binding site" evidence="1">
    <location>
        <position position="566"/>
    </location>
    <ligand>
        <name>Zn(2+)</name>
        <dbReference type="ChEBI" id="CHEBI:29105"/>
    </ligand>
</feature>
<feature type="binding site" evidence="1">
    <location>
        <position position="570"/>
    </location>
    <ligand>
        <name>Zn(2+)</name>
        <dbReference type="ChEBI" id="CHEBI:29105"/>
    </ligand>
</feature>
<feature type="binding site" evidence="1">
    <location>
        <position position="668"/>
    </location>
    <ligand>
        <name>Zn(2+)</name>
        <dbReference type="ChEBI" id="CHEBI:29105"/>
    </ligand>
</feature>
<feature type="binding site" evidence="1">
    <location>
        <position position="672"/>
    </location>
    <ligand>
        <name>Zn(2+)</name>
        <dbReference type="ChEBI" id="CHEBI:29105"/>
    </ligand>
</feature>
<keyword id="KW-0030">Aminoacyl-tRNA synthetase</keyword>
<keyword id="KW-0067">ATP-binding</keyword>
<keyword id="KW-0963">Cytoplasm</keyword>
<keyword id="KW-0436">Ligase</keyword>
<keyword id="KW-0479">Metal-binding</keyword>
<keyword id="KW-0547">Nucleotide-binding</keyword>
<keyword id="KW-0648">Protein biosynthesis</keyword>
<keyword id="KW-0694">RNA-binding</keyword>
<keyword id="KW-0820">tRNA-binding</keyword>
<keyword id="KW-0862">Zinc</keyword>
<name>SYA_CLOP1</name>
<comment type="function">
    <text evidence="1">Catalyzes the attachment of alanine to tRNA(Ala) in a two-step reaction: alanine is first activated by ATP to form Ala-AMP and then transferred to the acceptor end of tRNA(Ala). Also edits incorrectly charged Ser-tRNA(Ala) and Gly-tRNA(Ala) via its editing domain.</text>
</comment>
<comment type="catalytic activity">
    <reaction evidence="1">
        <text>tRNA(Ala) + L-alanine + ATP = L-alanyl-tRNA(Ala) + AMP + diphosphate</text>
        <dbReference type="Rhea" id="RHEA:12540"/>
        <dbReference type="Rhea" id="RHEA-COMP:9657"/>
        <dbReference type="Rhea" id="RHEA-COMP:9923"/>
        <dbReference type="ChEBI" id="CHEBI:30616"/>
        <dbReference type="ChEBI" id="CHEBI:33019"/>
        <dbReference type="ChEBI" id="CHEBI:57972"/>
        <dbReference type="ChEBI" id="CHEBI:78442"/>
        <dbReference type="ChEBI" id="CHEBI:78497"/>
        <dbReference type="ChEBI" id="CHEBI:456215"/>
        <dbReference type="EC" id="6.1.1.7"/>
    </reaction>
</comment>
<comment type="cofactor">
    <cofactor evidence="1">
        <name>Zn(2+)</name>
        <dbReference type="ChEBI" id="CHEBI:29105"/>
    </cofactor>
    <text evidence="1">Binds 1 zinc ion per subunit.</text>
</comment>
<comment type="subcellular location">
    <subcellularLocation>
        <location evidence="1">Cytoplasm</location>
    </subcellularLocation>
</comment>
<comment type="domain">
    <text evidence="1">Consists of three domains; the N-terminal catalytic domain, the editing domain and the C-terminal C-Ala domain. The editing domain removes incorrectly charged amino acids, while the C-Ala domain, along with tRNA(Ala), serves as a bridge to cooperatively bring together the editing and aminoacylation centers thus stimulating deacylation of misacylated tRNAs.</text>
</comment>
<comment type="similarity">
    <text evidence="1">Belongs to the class-II aminoacyl-tRNA synthetase family.</text>
</comment>
<dbReference type="EC" id="6.1.1.7" evidence="1"/>
<dbReference type="EMBL" id="CP000246">
    <property type="protein sequence ID" value="ABG82710.1"/>
    <property type="molecule type" value="Genomic_DNA"/>
</dbReference>
<dbReference type="RefSeq" id="WP_003459676.1">
    <property type="nucleotide sequence ID" value="NC_008261.1"/>
</dbReference>
<dbReference type="SMR" id="Q0TPH4"/>
<dbReference type="STRING" id="195103.CPF_2033"/>
<dbReference type="PaxDb" id="195103-CPF_2033"/>
<dbReference type="KEGG" id="cpf:CPF_2033"/>
<dbReference type="eggNOG" id="COG0013">
    <property type="taxonomic scope" value="Bacteria"/>
</dbReference>
<dbReference type="HOGENOM" id="CLU_004485_1_1_9"/>
<dbReference type="Proteomes" id="UP000001823">
    <property type="component" value="Chromosome"/>
</dbReference>
<dbReference type="GO" id="GO:0005829">
    <property type="term" value="C:cytosol"/>
    <property type="evidence" value="ECO:0007669"/>
    <property type="project" value="TreeGrafter"/>
</dbReference>
<dbReference type="GO" id="GO:0004813">
    <property type="term" value="F:alanine-tRNA ligase activity"/>
    <property type="evidence" value="ECO:0007669"/>
    <property type="project" value="UniProtKB-UniRule"/>
</dbReference>
<dbReference type="GO" id="GO:0002161">
    <property type="term" value="F:aminoacyl-tRNA deacylase activity"/>
    <property type="evidence" value="ECO:0007669"/>
    <property type="project" value="TreeGrafter"/>
</dbReference>
<dbReference type="GO" id="GO:0005524">
    <property type="term" value="F:ATP binding"/>
    <property type="evidence" value="ECO:0007669"/>
    <property type="project" value="UniProtKB-UniRule"/>
</dbReference>
<dbReference type="GO" id="GO:0140096">
    <property type="term" value="F:catalytic activity, acting on a protein"/>
    <property type="evidence" value="ECO:0007669"/>
    <property type="project" value="UniProtKB-ARBA"/>
</dbReference>
<dbReference type="GO" id="GO:0016740">
    <property type="term" value="F:transferase activity"/>
    <property type="evidence" value="ECO:0007669"/>
    <property type="project" value="UniProtKB-ARBA"/>
</dbReference>
<dbReference type="GO" id="GO:0000049">
    <property type="term" value="F:tRNA binding"/>
    <property type="evidence" value="ECO:0007669"/>
    <property type="project" value="UniProtKB-KW"/>
</dbReference>
<dbReference type="GO" id="GO:0008270">
    <property type="term" value="F:zinc ion binding"/>
    <property type="evidence" value="ECO:0007669"/>
    <property type="project" value="UniProtKB-UniRule"/>
</dbReference>
<dbReference type="GO" id="GO:0006419">
    <property type="term" value="P:alanyl-tRNA aminoacylation"/>
    <property type="evidence" value="ECO:0007669"/>
    <property type="project" value="UniProtKB-UniRule"/>
</dbReference>
<dbReference type="CDD" id="cd00673">
    <property type="entry name" value="AlaRS_core"/>
    <property type="match status" value="1"/>
</dbReference>
<dbReference type="FunFam" id="3.10.310.40:FF:000001">
    <property type="entry name" value="Alanine--tRNA ligase"/>
    <property type="match status" value="1"/>
</dbReference>
<dbReference type="FunFam" id="3.30.54.20:FF:000001">
    <property type="entry name" value="Alanine--tRNA ligase"/>
    <property type="match status" value="1"/>
</dbReference>
<dbReference type="FunFam" id="3.30.930.10:FF:000004">
    <property type="entry name" value="Alanine--tRNA ligase"/>
    <property type="match status" value="1"/>
</dbReference>
<dbReference type="FunFam" id="3.30.980.10:FF:000004">
    <property type="entry name" value="Alanine--tRNA ligase, cytoplasmic"/>
    <property type="match status" value="1"/>
</dbReference>
<dbReference type="Gene3D" id="2.40.30.130">
    <property type="match status" value="1"/>
</dbReference>
<dbReference type="Gene3D" id="3.10.310.40">
    <property type="match status" value="1"/>
</dbReference>
<dbReference type="Gene3D" id="3.30.54.20">
    <property type="match status" value="1"/>
</dbReference>
<dbReference type="Gene3D" id="6.10.250.550">
    <property type="match status" value="1"/>
</dbReference>
<dbReference type="Gene3D" id="3.30.930.10">
    <property type="entry name" value="Bira Bifunctional Protein, Domain 2"/>
    <property type="match status" value="1"/>
</dbReference>
<dbReference type="Gene3D" id="3.30.980.10">
    <property type="entry name" value="Threonyl-trna Synthetase, Chain A, domain 2"/>
    <property type="match status" value="1"/>
</dbReference>
<dbReference type="HAMAP" id="MF_00036_B">
    <property type="entry name" value="Ala_tRNA_synth_B"/>
    <property type="match status" value="1"/>
</dbReference>
<dbReference type="InterPro" id="IPR045864">
    <property type="entry name" value="aa-tRNA-synth_II/BPL/LPL"/>
</dbReference>
<dbReference type="InterPro" id="IPR002318">
    <property type="entry name" value="Ala-tRNA-lgiase_IIc"/>
</dbReference>
<dbReference type="InterPro" id="IPR018162">
    <property type="entry name" value="Ala-tRNA-ligase_IIc_anticod-bd"/>
</dbReference>
<dbReference type="InterPro" id="IPR018165">
    <property type="entry name" value="Ala-tRNA-synth_IIc_core"/>
</dbReference>
<dbReference type="InterPro" id="IPR018164">
    <property type="entry name" value="Ala-tRNA-synth_IIc_N"/>
</dbReference>
<dbReference type="InterPro" id="IPR050058">
    <property type="entry name" value="Ala-tRNA_ligase"/>
</dbReference>
<dbReference type="InterPro" id="IPR023033">
    <property type="entry name" value="Ala_tRNA_ligase_euk/bac"/>
</dbReference>
<dbReference type="InterPro" id="IPR003156">
    <property type="entry name" value="DHHA1_dom"/>
</dbReference>
<dbReference type="InterPro" id="IPR018163">
    <property type="entry name" value="Thr/Ala-tRNA-synth_IIc_edit"/>
</dbReference>
<dbReference type="InterPro" id="IPR009000">
    <property type="entry name" value="Transl_B-barrel_sf"/>
</dbReference>
<dbReference type="InterPro" id="IPR012947">
    <property type="entry name" value="tRNA_SAD"/>
</dbReference>
<dbReference type="NCBIfam" id="TIGR00344">
    <property type="entry name" value="alaS"/>
    <property type="match status" value="1"/>
</dbReference>
<dbReference type="PANTHER" id="PTHR11777:SF9">
    <property type="entry name" value="ALANINE--TRNA LIGASE, CYTOPLASMIC"/>
    <property type="match status" value="1"/>
</dbReference>
<dbReference type="PANTHER" id="PTHR11777">
    <property type="entry name" value="ALANYL-TRNA SYNTHETASE"/>
    <property type="match status" value="1"/>
</dbReference>
<dbReference type="Pfam" id="PF02272">
    <property type="entry name" value="DHHA1"/>
    <property type="match status" value="1"/>
</dbReference>
<dbReference type="Pfam" id="PF01411">
    <property type="entry name" value="tRNA-synt_2c"/>
    <property type="match status" value="1"/>
</dbReference>
<dbReference type="Pfam" id="PF07973">
    <property type="entry name" value="tRNA_SAD"/>
    <property type="match status" value="1"/>
</dbReference>
<dbReference type="PRINTS" id="PR00980">
    <property type="entry name" value="TRNASYNTHALA"/>
</dbReference>
<dbReference type="SMART" id="SM00863">
    <property type="entry name" value="tRNA_SAD"/>
    <property type="match status" value="1"/>
</dbReference>
<dbReference type="SUPFAM" id="SSF55681">
    <property type="entry name" value="Class II aaRS and biotin synthetases"/>
    <property type="match status" value="1"/>
</dbReference>
<dbReference type="SUPFAM" id="SSF101353">
    <property type="entry name" value="Putative anticodon-binding domain of alanyl-tRNA synthetase (AlaRS)"/>
    <property type="match status" value="1"/>
</dbReference>
<dbReference type="SUPFAM" id="SSF55186">
    <property type="entry name" value="ThrRS/AlaRS common domain"/>
    <property type="match status" value="1"/>
</dbReference>
<dbReference type="SUPFAM" id="SSF50447">
    <property type="entry name" value="Translation proteins"/>
    <property type="match status" value="1"/>
</dbReference>
<dbReference type="PROSITE" id="PS50860">
    <property type="entry name" value="AA_TRNA_LIGASE_II_ALA"/>
    <property type="match status" value="1"/>
</dbReference>
<evidence type="ECO:0000255" key="1">
    <source>
        <dbReference type="HAMAP-Rule" id="MF_00036"/>
    </source>
</evidence>
<reference key="1">
    <citation type="journal article" date="2006" name="Genome Res.">
        <title>Skewed genomic variability in strains of the toxigenic bacterial pathogen, Clostridium perfringens.</title>
        <authorList>
            <person name="Myers G.S.A."/>
            <person name="Rasko D.A."/>
            <person name="Cheung J.K."/>
            <person name="Ravel J."/>
            <person name="Seshadri R."/>
            <person name="DeBoy R.T."/>
            <person name="Ren Q."/>
            <person name="Varga J."/>
            <person name="Awad M.M."/>
            <person name="Brinkac L.M."/>
            <person name="Daugherty S.C."/>
            <person name="Haft D.H."/>
            <person name="Dodson R.J."/>
            <person name="Madupu R."/>
            <person name="Nelson W.C."/>
            <person name="Rosovitz M.J."/>
            <person name="Sullivan S.A."/>
            <person name="Khouri H."/>
            <person name="Dimitrov G.I."/>
            <person name="Watkins K.L."/>
            <person name="Mulligan S."/>
            <person name="Benton J."/>
            <person name="Radune D."/>
            <person name="Fisher D.J."/>
            <person name="Atkins H.S."/>
            <person name="Hiscox T."/>
            <person name="Jost B.H."/>
            <person name="Billington S.J."/>
            <person name="Songer J.G."/>
            <person name="McClane B.A."/>
            <person name="Titball R.W."/>
            <person name="Rood J.I."/>
            <person name="Melville S.B."/>
            <person name="Paulsen I.T."/>
        </authorList>
    </citation>
    <scope>NUCLEOTIDE SEQUENCE [LARGE SCALE GENOMIC DNA]</scope>
    <source>
        <strain>ATCC 13124 / DSM 756 / JCM 1290 / NCIMB 6125 / NCTC 8237 / S 107 / Type A</strain>
    </source>
</reference>
<organism>
    <name type="scientific">Clostridium perfringens (strain ATCC 13124 / DSM 756 / JCM 1290 / NCIMB 6125 / NCTC 8237 / Type A)</name>
    <dbReference type="NCBI Taxonomy" id="195103"/>
    <lineage>
        <taxon>Bacteria</taxon>
        <taxon>Bacillati</taxon>
        <taxon>Bacillota</taxon>
        <taxon>Clostridia</taxon>
        <taxon>Eubacteriales</taxon>
        <taxon>Clostridiaceae</taxon>
        <taxon>Clostridium</taxon>
    </lineage>
</organism>
<protein>
    <recommendedName>
        <fullName evidence="1">Alanine--tRNA ligase</fullName>
        <ecNumber evidence="1">6.1.1.7</ecNumber>
    </recommendedName>
    <alternativeName>
        <fullName evidence="1">Alanyl-tRNA synthetase</fullName>
        <shortName evidence="1">AlaRS</shortName>
    </alternativeName>
</protein>
<accession>Q0TPH4</accession>
<sequence length="879" mass="98071">MKFMGANELREKYLSFFESKDHLRLQSFPLVPKNDKSLLLINAGMAPLKPYFTGLEEPPKRRITTCQKCIRTGDIENVGKTSRHGTFFEMLGNFSFGDYFKSEIIPWAWEFITETLGIPKDKLYVTIYLNDDEAYDIWTSKTDVDPSRIFRLGKDDNFWEIGVGPCGPCTEIHFDRGEGKVETVEEFLEASDADRIVEFWNLVFTQFDKDEEGNYNELAQKNIDTGMGLERIATIMQGVDNIFEIDTVKNILNKACELTNAKYGEDKDKDVSLRIITDHGKSVTFLICDGVQPSNEGRGYVLRRLLRRAARHGRLLGVKGIFLNEMVDAVVENYGEAYPELKEKADYIKKIIKLEEERFNETIDSGMDILMSYISEMEEKNEKVLSGAKAFKLYDTYGFPLELTQEILEEKGLELDIENFNKEMKEQRERARNARGESSYMGSEESPVNKVDASIVTEFDGYVNLELNSKVIVLGNNEEFKSELKEGEEGFLLTDKTPFYAEMGGQVGDRGNITSETGMAIVTDCKKNVGGKFVHYIKVIEGSLKEGQEVKLSVDASRRSNICKNHTATHMLHEALKEVLGDHVNQSGSYVDEERLRFDFTHFAALTEEELEKVELLVNEKIMTVSVVDTKEMSLDEARNSGATCLFDEKYAEKVRVVSVGDFSKELCGGTHVANSGEIGLFKIVSESGVAAGIRRIEAVTGISALKFMELKNNMLKEAASMLKCNEKDIAKRIAAQAHELKEKDKEIAELKAKLVQGAEDDILKDKVEINGVELVTAELKDVDGNSLRDLADKVRNKLNNGIVVLASDNGGKVNLVAMATKNSLANGVHCGKVIKEVAAVVGGGGGGRPDMAQAGGKNPENIAKALEKAKEVVELLVK</sequence>
<proteinExistence type="inferred from homology"/>
<gene>
    <name evidence="1" type="primary">alaS</name>
    <name type="ordered locus">CPF_2033</name>
</gene>